<proteinExistence type="inferred from homology"/>
<protein>
    <recommendedName>
        <fullName evidence="1">Glutamate 5-kinase</fullName>
        <ecNumber evidence="1">2.7.2.11</ecNumber>
    </recommendedName>
    <alternativeName>
        <fullName evidence="1">Gamma-glutamyl kinase</fullName>
        <shortName evidence="1">GK</shortName>
    </alternativeName>
</protein>
<evidence type="ECO:0000255" key="1">
    <source>
        <dbReference type="HAMAP-Rule" id="MF_00456"/>
    </source>
</evidence>
<gene>
    <name evidence="1" type="primary">proB</name>
    <name type="ordered locus">ETA_25940</name>
</gene>
<name>PROB_ERWT9</name>
<accession>B2VHM7</accession>
<sequence length="367" mass="39276">MSSSQTLVVKLGTSVLTGGSRRLNRAHIVELVRQCAQQHAAGHRIVIVTSGAMAAGREHLGYPELPPTIASKQLLAAVGQSRLIQLWEQMFSIYGIHIGQMLLTRADLEDRERFLNARDTLRALLDNHIVPVINENDAVATAEIKVGDNDNLSALAAILAGADKLLLLTDQQGLFTADPRNNPQAELIRDVRGIDDDLRALAGDSVSGLGTGGMATKLQAADIACRAGIDTIIAAGSRPGVIGDVIASHPVGTCFHALETPLENRKRWIFGAPPAGELVVDDGALSAILERGSSLLPKGIREISGNFSRGEVIRIRSLQGRDVAHGVSRYNSDAMRMIAGHHSQQIGEILGYEYGPVAIHRDDMIVS</sequence>
<comment type="function">
    <text evidence="1">Catalyzes the transfer of a phosphate group to glutamate to form L-glutamate 5-phosphate.</text>
</comment>
<comment type="catalytic activity">
    <reaction evidence="1">
        <text>L-glutamate + ATP = L-glutamyl 5-phosphate + ADP</text>
        <dbReference type="Rhea" id="RHEA:14877"/>
        <dbReference type="ChEBI" id="CHEBI:29985"/>
        <dbReference type="ChEBI" id="CHEBI:30616"/>
        <dbReference type="ChEBI" id="CHEBI:58274"/>
        <dbReference type="ChEBI" id="CHEBI:456216"/>
        <dbReference type="EC" id="2.7.2.11"/>
    </reaction>
</comment>
<comment type="pathway">
    <text evidence="1">Amino-acid biosynthesis; L-proline biosynthesis; L-glutamate 5-semialdehyde from L-glutamate: step 1/2.</text>
</comment>
<comment type="subcellular location">
    <subcellularLocation>
        <location evidence="1">Cytoplasm</location>
    </subcellularLocation>
</comment>
<comment type="similarity">
    <text evidence="1">Belongs to the glutamate 5-kinase family.</text>
</comment>
<keyword id="KW-0028">Amino-acid biosynthesis</keyword>
<keyword id="KW-0067">ATP-binding</keyword>
<keyword id="KW-0963">Cytoplasm</keyword>
<keyword id="KW-0418">Kinase</keyword>
<keyword id="KW-0547">Nucleotide-binding</keyword>
<keyword id="KW-0641">Proline biosynthesis</keyword>
<keyword id="KW-1185">Reference proteome</keyword>
<keyword id="KW-0808">Transferase</keyword>
<feature type="chain" id="PRO_1000125236" description="Glutamate 5-kinase">
    <location>
        <begin position="1"/>
        <end position="367"/>
    </location>
</feature>
<feature type="domain" description="PUA" evidence="1">
    <location>
        <begin position="275"/>
        <end position="353"/>
    </location>
</feature>
<feature type="binding site" evidence="1">
    <location>
        <position position="10"/>
    </location>
    <ligand>
        <name>ATP</name>
        <dbReference type="ChEBI" id="CHEBI:30616"/>
    </ligand>
</feature>
<feature type="binding site" evidence="1">
    <location>
        <position position="50"/>
    </location>
    <ligand>
        <name>substrate</name>
    </ligand>
</feature>
<feature type="binding site" evidence="1">
    <location>
        <position position="137"/>
    </location>
    <ligand>
        <name>substrate</name>
    </ligand>
</feature>
<feature type="binding site" evidence="1">
    <location>
        <position position="149"/>
    </location>
    <ligand>
        <name>substrate</name>
    </ligand>
</feature>
<feature type="binding site" evidence="1">
    <location>
        <begin position="169"/>
        <end position="170"/>
    </location>
    <ligand>
        <name>ATP</name>
        <dbReference type="ChEBI" id="CHEBI:30616"/>
    </ligand>
</feature>
<feature type="binding site" evidence="1">
    <location>
        <begin position="211"/>
        <end position="217"/>
    </location>
    <ligand>
        <name>ATP</name>
        <dbReference type="ChEBI" id="CHEBI:30616"/>
    </ligand>
</feature>
<dbReference type="EC" id="2.7.2.11" evidence="1"/>
<dbReference type="EMBL" id="CU468135">
    <property type="protein sequence ID" value="CAO97640.1"/>
    <property type="molecule type" value="Genomic_DNA"/>
</dbReference>
<dbReference type="RefSeq" id="WP_012442305.1">
    <property type="nucleotide sequence ID" value="NC_010694.1"/>
</dbReference>
<dbReference type="SMR" id="B2VHM7"/>
<dbReference type="STRING" id="465817.ETA_25940"/>
<dbReference type="KEGG" id="eta:ETA_25940"/>
<dbReference type="eggNOG" id="COG0263">
    <property type="taxonomic scope" value="Bacteria"/>
</dbReference>
<dbReference type="HOGENOM" id="CLU_025400_2_0_6"/>
<dbReference type="OrthoDB" id="9804434at2"/>
<dbReference type="UniPathway" id="UPA00098">
    <property type="reaction ID" value="UER00359"/>
</dbReference>
<dbReference type="Proteomes" id="UP000001726">
    <property type="component" value="Chromosome"/>
</dbReference>
<dbReference type="GO" id="GO:0005829">
    <property type="term" value="C:cytosol"/>
    <property type="evidence" value="ECO:0007669"/>
    <property type="project" value="TreeGrafter"/>
</dbReference>
<dbReference type="GO" id="GO:0005524">
    <property type="term" value="F:ATP binding"/>
    <property type="evidence" value="ECO:0007669"/>
    <property type="project" value="UniProtKB-KW"/>
</dbReference>
<dbReference type="GO" id="GO:0004349">
    <property type="term" value="F:glutamate 5-kinase activity"/>
    <property type="evidence" value="ECO:0007669"/>
    <property type="project" value="UniProtKB-UniRule"/>
</dbReference>
<dbReference type="GO" id="GO:0003723">
    <property type="term" value="F:RNA binding"/>
    <property type="evidence" value="ECO:0007669"/>
    <property type="project" value="InterPro"/>
</dbReference>
<dbReference type="GO" id="GO:0055129">
    <property type="term" value="P:L-proline biosynthetic process"/>
    <property type="evidence" value="ECO:0007669"/>
    <property type="project" value="UniProtKB-UniRule"/>
</dbReference>
<dbReference type="CDD" id="cd04242">
    <property type="entry name" value="AAK_G5K_ProB"/>
    <property type="match status" value="1"/>
</dbReference>
<dbReference type="CDD" id="cd21157">
    <property type="entry name" value="PUA_G5K"/>
    <property type="match status" value="1"/>
</dbReference>
<dbReference type="FunFam" id="2.30.130.10:FF:000003">
    <property type="entry name" value="Glutamate 5-kinase"/>
    <property type="match status" value="1"/>
</dbReference>
<dbReference type="FunFam" id="3.40.1160.10:FF:000006">
    <property type="entry name" value="Glutamate 5-kinase"/>
    <property type="match status" value="1"/>
</dbReference>
<dbReference type="Gene3D" id="3.40.1160.10">
    <property type="entry name" value="Acetylglutamate kinase-like"/>
    <property type="match status" value="2"/>
</dbReference>
<dbReference type="Gene3D" id="2.30.130.10">
    <property type="entry name" value="PUA domain"/>
    <property type="match status" value="1"/>
</dbReference>
<dbReference type="HAMAP" id="MF_00456">
    <property type="entry name" value="ProB"/>
    <property type="match status" value="1"/>
</dbReference>
<dbReference type="InterPro" id="IPR036393">
    <property type="entry name" value="AceGlu_kinase-like_sf"/>
</dbReference>
<dbReference type="InterPro" id="IPR001048">
    <property type="entry name" value="Asp/Glu/Uridylate_kinase"/>
</dbReference>
<dbReference type="InterPro" id="IPR041739">
    <property type="entry name" value="G5K_ProB"/>
</dbReference>
<dbReference type="InterPro" id="IPR001057">
    <property type="entry name" value="Glu/AcGlu_kinase"/>
</dbReference>
<dbReference type="InterPro" id="IPR011529">
    <property type="entry name" value="Glu_5kinase"/>
</dbReference>
<dbReference type="InterPro" id="IPR005715">
    <property type="entry name" value="Glu_5kinase/COase_Synthase"/>
</dbReference>
<dbReference type="InterPro" id="IPR019797">
    <property type="entry name" value="Glutamate_5-kinase_CS"/>
</dbReference>
<dbReference type="InterPro" id="IPR002478">
    <property type="entry name" value="PUA"/>
</dbReference>
<dbReference type="InterPro" id="IPR015947">
    <property type="entry name" value="PUA-like_sf"/>
</dbReference>
<dbReference type="InterPro" id="IPR036974">
    <property type="entry name" value="PUA_sf"/>
</dbReference>
<dbReference type="NCBIfam" id="TIGR01027">
    <property type="entry name" value="proB"/>
    <property type="match status" value="1"/>
</dbReference>
<dbReference type="PANTHER" id="PTHR43654">
    <property type="entry name" value="GLUTAMATE 5-KINASE"/>
    <property type="match status" value="1"/>
</dbReference>
<dbReference type="PANTHER" id="PTHR43654:SF1">
    <property type="entry name" value="ISOPENTENYL PHOSPHATE KINASE"/>
    <property type="match status" value="1"/>
</dbReference>
<dbReference type="Pfam" id="PF00696">
    <property type="entry name" value="AA_kinase"/>
    <property type="match status" value="1"/>
</dbReference>
<dbReference type="Pfam" id="PF01472">
    <property type="entry name" value="PUA"/>
    <property type="match status" value="1"/>
</dbReference>
<dbReference type="PIRSF" id="PIRSF000729">
    <property type="entry name" value="GK"/>
    <property type="match status" value="1"/>
</dbReference>
<dbReference type="PRINTS" id="PR00474">
    <property type="entry name" value="GLU5KINASE"/>
</dbReference>
<dbReference type="SMART" id="SM00359">
    <property type="entry name" value="PUA"/>
    <property type="match status" value="1"/>
</dbReference>
<dbReference type="SUPFAM" id="SSF53633">
    <property type="entry name" value="Carbamate kinase-like"/>
    <property type="match status" value="1"/>
</dbReference>
<dbReference type="SUPFAM" id="SSF88697">
    <property type="entry name" value="PUA domain-like"/>
    <property type="match status" value="1"/>
</dbReference>
<dbReference type="PROSITE" id="PS00902">
    <property type="entry name" value="GLUTAMATE_5_KINASE"/>
    <property type="match status" value="1"/>
</dbReference>
<dbReference type="PROSITE" id="PS50890">
    <property type="entry name" value="PUA"/>
    <property type="match status" value="1"/>
</dbReference>
<organism>
    <name type="scientific">Erwinia tasmaniensis (strain DSM 17950 / CFBP 7177 / CIP 109463 / NCPPB 4357 / Et1/99)</name>
    <dbReference type="NCBI Taxonomy" id="465817"/>
    <lineage>
        <taxon>Bacteria</taxon>
        <taxon>Pseudomonadati</taxon>
        <taxon>Pseudomonadota</taxon>
        <taxon>Gammaproteobacteria</taxon>
        <taxon>Enterobacterales</taxon>
        <taxon>Erwiniaceae</taxon>
        <taxon>Erwinia</taxon>
    </lineage>
</organism>
<reference key="1">
    <citation type="journal article" date="2008" name="Environ. Microbiol.">
        <title>The genome of Erwinia tasmaniensis strain Et1/99, a non-pathogenic bacterium in the genus Erwinia.</title>
        <authorList>
            <person name="Kube M."/>
            <person name="Migdoll A.M."/>
            <person name="Mueller I."/>
            <person name="Kuhl H."/>
            <person name="Beck A."/>
            <person name="Reinhardt R."/>
            <person name="Geider K."/>
        </authorList>
    </citation>
    <scope>NUCLEOTIDE SEQUENCE [LARGE SCALE GENOMIC DNA]</scope>
    <source>
        <strain>DSM 17950 / CFBP 7177 / CIP 109463 / NCPPB 4357 / Et1/99</strain>
    </source>
</reference>